<protein>
    <recommendedName>
        <fullName evidence="1">Ferredoxin--NADP reductase</fullName>
        <shortName evidence="1">FNR</shortName>
        <shortName evidence="1">Fd-NADP(+) reductase</shortName>
        <ecNumber evidence="1">1.18.1.2</ecNumber>
    </recommendedName>
</protein>
<accession>Q49ZU9</accession>
<proteinExistence type="inferred from homology"/>
<evidence type="ECO:0000255" key="1">
    <source>
        <dbReference type="HAMAP-Rule" id="MF_01685"/>
    </source>
</evidence>
<gene>
    <name type="ordered locus">SSP0530</name>
</gene>
<name>FENR_STAS1</name>
<feature type="chain" id="PRO_0000364949" description="Ferredoxin--NADP reductase">
    <location>
        <begin position="1"/>
        <end position="343"/>
    </location>
</feature>
<feature type="binding site" evidence="1">
    <location>
        <position position="31"/>
    </location>
    <ligand>
        <name>FAD</name>
        <dbReference type="ChEBI" id="CHEBI:57692"/>
    </ligand>
</feature>
<feature type="binding site" evidence="1">
    <location>
        <position position="39"/>
    </location>
    <ligand>
        <name>FAD</name>
        <dbReference type="ChEBI" id="CHEBI:57692"/>
    </ligand>
</feature>
<feature type="binding site" evidence="1">
    <location>
        <position position="43"/>
    </location>
    <ligand>
        <name>FAD</name>
        <dbReference type="ChEBI" id="CHEBI:57692"/>
    </ligand>
</feature>
<feature type="binding site" evidence="1">
    <location>
        <position position="83"/>
    </location>
    <ligand>
        <name>FAD</name>
        <dbReference type="ChEBI" id="CHEBI:57692"/>
    </ligand>
</feature>
<feature type="binding site" evidence="1">
    <location>
        <position position="118"/>
    </location>
    <ligand>
        <name>FAD</name>
        <dbReference type="ChEBI" id="CHEBI:57692"/>
    </ligand>
</feature>
<feature type="binding site" evidence="1">
    <location>
        <position position="285"/>
    </location>
    <ligand>
        <name>FAD</name>
        <dbReference type="ChEBI" id="CHEBI:57692"/>
    </ligand>
</feature>
<feature type="binding site" evidence="1">
    <location>
        <position position="326"/>
    </location>
    <ligand>
        <name>FAD</name>
        <dbReference type="ChEBI" id="CHEBI:57692"/>
    </ligand>
</feature>
<sequence length="343" mass="38285">MDDVIIIGGGPAGLFASFYSGLRGMRVRIIDIQDKLGGKMHVYPEKIIWDIGGLAPKPCFEVIQDTVKQGLHFEPEVNLEERVIDIRKIEQQHFEVETDKGNVFSSKSVIIAIGGGIINPKQLDIKDAERYKLTNLHYVVQSLKKFKDKHVLISGAGNSALDWANDLSGYAKSVTLIYRKADIKGYEVMKEKLEQLNVKKLPNTHIHQLIGDETQTQIEQVILENIETGEHTVKSFDDVIISHGFDRENTLLEQSSAKVDMFNEYSIKGFGNTATSIDGLYACGDIIYHEAKAHLIASAFSDAANAANLAKLYIEPKAKAEGYVSSHNEIFKESNKVVMKKYL</sequence>
<organism>
    <name type="scientific">Staphylococcus saprophyticus subsp. saprophyticus (strain ATCC 15305 / DSM 20229 / NCIMB 8711 / NCTC 7292 / S-41)</name>
    <dbReference type="NCBI Taxonomy" id="342451"/>
    <lineage>
        <taxon>Bacteria</taxon>
        <taxon>Bacillati</taxon>
        <taxon>Bacillota</taxon>
        <taxon>Bacilli</taxon>
        <taxon>Bacillales</taxon>
        <taxon>Staphylococcaceae</taxon>
        <taxon>Staphylococcus</taxon>
    </lineage>
</organism>
<comment type="catalytic activity">
    <reaction evidence="1">
        <text>2 reduced [2Fe-2S]-[ferredoxin] + NADP(+) + H(+) = 2 oxidized [2Fe-2S]-[ferredoxin] + NADPH</text>
        <dbReference type="Rhea" id="RHEA:20125"/>
        <dbReference type="Rhea" id="RHEA-COMP:10000"/>
        <dbReference type="Rhea" id="RHEA-COMP:10001"/>
        <dbReference type="ChEBI" id="CHEBI:15378"/>
        <dbReference type="ChEBI" id="CHEBI:33737"/>
        <dbReference type="ChEBI" id="CHEBI:33738"/>
        <dbReference type="ChEBI" id="CHEBI:57783"/>
        <dbReference type="ChEBI" id="CHEBI:58349"/>
        <dbReference type="EC" id="1.18.1.2"/>
    </reaction>
</comment>
<comment type="cofactor">
    <cofactor evidence="1">
        <name>FAD</name>
        <dbReference type="ChEBI" id="CHEBI:57692"/>
    </cofactor>
    <text evidence="1">Binds 1 FAD per subunit.</text>
</comment>
<comment type="subunit">
    <text evidence="1">Homodimer.</text>
</comment>
<comment type="similarity">
    <text evidence="1">Belongs to the ferredoxin--NADP reductase type 2 family.</text>
</comment>
<reference key="1">
    <citation type="journal article" date="2005" name="Proc. Natl. Acad. Sci. U.S.A.">
        <title>Whole genome sequence of Staphylococcus saprophyticus reveals the pathogenesis of uncomplicated urinary tract infection.</title>
        <authorList>
            <person name="Kuroda M."/>
            <person name="Yamashita A."/>
            <person name="Hirakawa H."/>
            <person name="Kumano M."/>
            <person name="Morikawa K."/>
            <person name="Higashide M."/>
            <person name="Maruyama A."/>
            <person name="Inose Y."/>
            <person name="Matoba K."/>
            <person name="Toh H."/>
            <person name="Kuhara S."/>
            <person name="Hattori M."/>
            <person name="Ohta T."/>
        </authorList>
    </citation>
    <scope>NUCLEOTIDE SEQUENCE [LARGE SCALE GENOMIC DNA]</scope>
    <source>
        <strain>ATCC 15305 / DSM 20229 / NCIMB 8711 / NCTC 7292 / S-41</strain>
    </source>
</reference>
<dbReference type="EC" id="1.18.1.2" evidence="1"/>
<dbReference type="EMBL" id="AP008934">
    <property type="protein sequence ID" value="BAE17675.1"/>
    <property type="molecule type" value="Genomic_DNA"/>
</dbReference>
<dbReference type="RefSeq" id="WP_002482481.1">
    <property type="nucleotide sequence ID" value="NZ_MTGA01000036.1"/>
</dbReference>
<dbReference type="SMR" id="Q49ZU9"/>
<dbReference type="KEGG" id="ssp:SSP0530"/>
<dbReference type="eggNOG" id="COG0492">
    <property type="taxonomic scope" value="Bacteria"/>
</dbReference>
<dbReference type="HOGENOM" id="CLU_031864_5_5_9"/>
<dbReference type="OrthoDB" id="9806179at2"/>
<dbReference type="Proteomes" id="UP000006371">
    <property type="component" value="Chromosome"/>
</dbReference>
<dbReference type="GO" id="GO:0004324">
    <property type="term" value="F:ferredoxin-NADP+ reductase activity"/>
    <property type="evidence" value="ECO:0007669"/>
    <property type="project" value="UniProtKB-UniRule"/>
</dbReference>
<dbReference type="GO" id="GO:0050660">
    <property type="term" value="F:flavin adenine dinucleotide binding"/>
    <property type="evidence" value="ECO:0007669"/>
    <property type="project" value="UniProtKB-UniRule"/>
</dbReference>
<dbReference type="GO" id="GO:0050661">
    <property type="term" value="F:NADP binding"/>
    <property type="evidence" value="ECO:0007669"/>
    <property type="project" value="UniProtKB-UniRule"/>
</dbReference>
<dbReference type="Gene3D" id="3.50.50.60">
    <property type="entry name" value="FAD/NAD(P)-binding domain"/>
    <property type="match status" value="2"/>
</dbReference>
<dbReference type="HAMAP" id="MF_01685">
    <property type="entry name" value="FENR2"/>
    <property type="match status" value="1"/>
</dbReference>
<dbReference type="InterPro" id="IPR036188">
    <property type="entry name" value="FAD/NAD-bd_sf"/>
</dbReference>
<dbReference type="InterPro" id="IPR023753">
    <property type="entry name" value="FAD/NAD-binding_dom"/>
</dbReference>
<dbReference type="InterPro" id="IPR022890">
    <property type="entry name" value="Fd--NADP_Rdtase_type_2"/>
</dbReference>
<dbReference type="InterPro" id="IPR050097">
    <property type="entry name" value="Ferredoxin-NADP_redctase_2"/>
</dbReference>
<dbReference type="PANTHER" id="PTHR48105">
    <property type="entry name" value="THIOREDOXIN REDUCTASE 1-RELATED-RELATED"/>
    <property type="match status" value="1"/>
</dbReference>
<dbReference type="Pfam" id="PF07992">
    <property type="entry name" value="Pyr_redox_2"/>
    <property type="match status" value="1"/>
</dbReference>
<dbReference type="PRINTS" id="PR00368">
    <property type="entry name" value="FADPNR"/>
</dbReference>
<dbReference type="PRINTS" id="PR00469">
    <property type="entry name" value="PNDRDTASEII"/>
</dbReference>
<dbReference type="SUPFAM" id="SSF51905">
    <property type="entry name" value="FAD/NAD(P)-binding domain"/>
    <property type="match status" value="1"/>
</dbReference>
<keyword id="KW-0274">FAD</keyword>
<keyword id="KW-0285">Flavoprotein</keyword>
<keyword id="KW-0521">NADP</keyword>
<keyword id="KW-0560">Oxidoreductase</keyword>
<keyword id="KW-1185">Reference proteome</keyword>